<accession>A2C471</accession>
<feature type="chain" id="PRO_0000374452" description="tRNA-2-methylthio-N(6)-dimethylallyladenosine synthase">
    <location>
        <begin position="1"/>
        <end position="463"/>
    </location>
</feature>
<feature type="domain" description="MTTase N-terminal" evidence="1">
    <location>
        <begin position="19"/>
        <end position="135"/>
    </location>
</feature>
<feature type="domain" description="Radical SAM core" evidence="2">
    <location>
        <begin position="156"/>
        <end position="393"/>
    </location>
</feature>
<feature type="domain" description="TRAM" evidence="1">
    <location>
        <begin position="396"/>
        <end position="463"/>
    </location>
</feature>
<feature type="binding site" evidence="1">
    <location>
        <position position="28"/>
    </location>
    <ligand>
        <name>[4Fe-4S] cluster</name>
        <dbReference type="ChEBI" id="CHEBI:49883"/>
        <label>1</label>
    </ligand>
</feature>
<feature type="binding site" evidence="1">
    <location>
        <position position="64"/>
    </location>
    <ligand>
        <name>[4Fe-4S] cluster</name>
        <dbReference type="ChEBI" id="CHEBI:49883"/>
        <label>1</label>
    </ligand>
</feature>
<feature type="binding site" evidence="1">
    <location>
        <position position="98"/>
    </location>
    <ligand>
        <name>[4Fe-4S] cluster</name>
        <dbReference type="ChEBI" id="CHEBI:49883"/>
        <label>1</label>
    </ligand>
</feature>
<feature type="binding site" evidence="1">
    <location>
        <position position="170"/>
    </location>
    <ligand>
        <name>[4Fe-4S] cluster</name>
        <dbReference type="ChEBI" id="CHEBI:49883"/>
        <label>2</label>
        <note>4Fe-4S-S-AdoMet</note>
    </ligand>
</feature>
<feature type="binding site" evidence="1">
    <location>
        <position position="174"/>
    </location>
    <ligand>
        <name>[4Fe-4S] cluster</name>
        <dbReference type="ChEBI" id="CHEBI:49883"/>
        <label>2</label>
        <note>4Fe-4S-S-AdoMet</note>
    </ligand>
</feature>
<feature type="binding site" evidence="1">
    <location>
        <position position="177"/>
    </location>
    <ligand>
        <name>[4Fe-4S] cluster</name>
        <dbReference type="ChEBI" id="CHEBI:49883"/>
        <label>2</label>
        <note>4Fe-4S-S-AdoMet</note>
    </ligand>
</feature>
<protein>
    <recommendedName>
        <fullName evidence="1">tRNA-2-methylthio-N(6)-dimethylallyladenosine synthase</fullName>
        <ecNumber evidence="1">2.8.4.3</ecNumber>
    </recommendedName>
    <alternativeName>
        <fullName evidence="1">(Dimethylallyl)adenosine tRNA methylthiotransferase MiaB</fullName>
    </alternativeName>
    <alternativeName>
        <fullName evidence="1">tRNA-i(6)A37 methylthiotransferase</fullName>
    </alternativeName>
</protein>
<name>MIAB_PROM1</name>
<dbReference type="EC" id="2.8.4.3" evidence="1"/>
<dbReference type="EMBL" id="CP000553">
    <property type="protein sequence ID" value="ABM76281.1"/>
    <property type="molecule type" value="Genomic_DNA"/>
</dbReference>
<dbReference type="RefSeq" id="WP_011824282.1">
    <property type="nucleotide sequence ID" value="NC_008819.1"/>
</dbReference>
<dbReference type="SMR" id="A2C471"/>
<dbReference type="KEGG" id="pme:NATL1_17251"/>
<dbReference type="eggNOG" id="COG0621">
    <property type="taxonomic scope" value="Bacteria"/>
</dbReference>
<dbReference type="HOGENOM" id="CLU_018697_2_2_3"/>
<dbReference type="Proteomes" id="UP000002592">
    <property type="component" value="Chromosome"/>
</dbReference>
<dbReference type="GO" id="GO:0005737">
    <property type="term" value="C:cytoplasm"/>
    <property type="evidence" value="ECO:0007669"/>
    <property type="project" value="UniProtKB-SubCell"/>
</dbReference>
<dbReference type="GO" id="GO:0051539">
    <property type="term" value="F:4 iron, 4 sulfur cluster binding"/>
    <property type="evidence" value="ECO:0007669"/>
    <property type="project" value="UniProtKB-UniRule"/>
</dbReference>
<dbReference type="GO" id="GO:0046872">
    <property type="term" value="F:metal ion binding"/>
    <property type="evidence" value="ECO:0007669"/>
    <property type="project" value="UniProtKB-KW"/>
</dbReference>
<dbReference type="GO" id="GO:0035596">
    <property type="term" value="F:methylthiotransferase activity"/>
    <property type="evidence" value="ECO:0007669"/>
    <property type="project" value="InterPro"/>
</dbReference>
<dbReference type="GO" id="GO:0035600">
    <property type="term" value="P:tRNA methylthiolation"/>
    <property type="evidence" value="ECO:0007669"/>
    <property type="project" value="TreeGrafter"/>
</dbReference>
<dbReference type="CDD" id="cd01335">
    <property type="entry name" value="Radical_SAM"/>
    <property type="match status" value="1"/>
</dbReference>
<dbReference type="FunFam" id="3.40.50.12160:FF:000003">
    <property type="entry name" value="CDK5 regulatory subunit-associated protein 1"/>
    <property type="match status" value="1"/>
</dbReference>
<dbReference type="FunFam" id="3.80.30.20:FF:000001">
    <property type="entry name" value="tRNA-2-methylthio-N(6)-dimethylallyladenosine synthase 2"/>
    <property type="match status" value="1"/>
</dbReference>
<dbReference type="Gene3D" id="3.40.50.12160">
    <property type="entry name" value="Methylthiotransferase, N-terminal domain"/>
    <property type="match status" value="1"/>
</dbReference>
<dbReference type="Gene3D" id="3.80.30.20">
    <property type="entry name" value="tm_1862 like domain"/>
    <property type="match status" value="1"/>
</dbReference>
<dbReference type="HAMAP" id="MF_01864">
    <property type="entry name" value="tRNA_metthiotr_MiaB"/>
    <property type="match status" value="1"/>
</dbReference>
<dbReference type="InterPro" id="IPR006638">
    <property type="entry name" value="Elp3/MiaA/NifB-like_rSAM"/>
</dbReference>
<dbReference type="InterPro" id="IPR005839">
    <property type="entry name" value="Methylthiotransferase"/>
</dbReference>
<dbReference type="InterPro" id="IPR020612">
    <property type="entry name" value="Methylthiotransferase_CS"/>
</dbReference>
<dbReference type="InterPro" id="IPR013848">
    <property type="entry name" value="Methylthiotransferase_N"/>
</dbReference>
<dbReference type="InterPro" id="IPR038135">
    <property type="entry name" value="Methylthiotransferase_N_sf"/>
</dbReference>
<dbReference type="InterPro" id="IPR006463">
    <property type="entry name" value="MiaB_methiolase"/>
</dbReference>
<dbReference type="InterPro" id="IPR007197">
    <property type="entry name" value="rSAM"/>
</dbReference>
<dbReference type="InterPro" id="IPR023404">
    <property type="entry name" value="rSAM_horseshoe"/>
</dbReference>
<dbReference type="InterPro" id="IPR002792">
    <property type="entry name" value="TRAM_dom"/>
</dbReference>
<dbReference type="NCBIfam" id="TIGR01574">
    <property type="entry name" value="miaB-methiolase"/>
    <property type="match status" value="1"/>
</dbReference>
<dbReference type="NCBIfam" id="TIGR00089">
    <property type="entry name" value="MiaB/RimO family radical SAM methylthiotransferase"/>
    <property type="match status" value="1"/>
</dbReference>
<dbReference type="PANTHER" id="PTHR43020">
    <property type="entry name" value="CDK5 REGULATORY SUBUNIT-ASSOCIATED PROTEIN 1"/>
    <property type="match status" value="1"/>
</dbReference>
<dbReference type="PANTHER" id="PTHR43020:SF2">
    <property type="entry name" value="MITOCHONDRIAL TRNA METHYLTHIOTRANSFERASE CDK5RAP1"/>
    <property type="match status" value="1"/>
</dbReference>
<dbReference type="Pfam" id="PF04055">
    <property type="entry name" value="Radical_SAM"/>
    <property type="match status" value="1"/>
</dbReference>
<dbReference type="Pfam" id="PF01938">
    <property type="entry name" value="TRAM"/>
    <property type="match status" value="1"/>
</dbReference>
<dbReference type="Pfam" id="PF00919">
    <property type="entry name" value="UPF0004"/>
    <property type="match status" value="1"/>
</dbReference>
<dbReference type="SFLD" id="SFLDF00273">
    <property type="entry name" value="(dimethylallyl)adenosine_tRNA"/>
    <property type="match status" value="1"/>
</dbReference>
<dbReference type="SFLD" id="SFLDG01082">
    <property type="entry name" value="B12-binding_domain_containing"/>
    <property type="match status" value="1"/>
</dbReference>
<dbReference type="SFLD" id="SFLDG01061">
    <property type="entry name" value="methylthiotransferase"/>
    <property type="match status" value="1"/>
</dbReference>
<dbReference type="SMART" id="SM00729">
    <property type="entry name" value="Elp3"/>
    <property type="match status" value="1"/>
</dbReference>
<dbReference type="SUPFAM" id="SSF102114">
    <property type="entry name" value="Radical SAM enzymes"/>
    <property type="match status" value="1"/>
</dbReference>
<dbReference type="PROSITE" id="PS51449">
    <property type="entry name" value="MTTASE_N"/>
    <property type="match status" value="1"/>
</dbReference>
<dbReference type="PROSITE" id="PS01278">
    <property type="entry name" value="MTTASE_RADICAL"/>
    <property type="match status" value="1"/>
</dbReference>
<dbReference type="PROSITE" id="PS51918">
    <property type="entry name" value="RADICAL_SAM"/>
    <property type="match status" value="1"/>
</dbReference>
<dbReference type="PROSITE" id="PS50926">
    <property type="entry name" value="TRAM"/>
    <property type="match status" value="1"/>
</dbReference>
<proteinExistence type="inferred from homology"/>
<keyword id="KW-0004">4Fe-4S</keyword>
<keyword id="KW-0963">Cytoplasm</keyword>
<keyword id="KW-0408">Iron</keyword>
<keyword id="KW-0411">Iron-sulfur</keyword>
<keyword id="KW-0479">Metal-binding</keyword>
<keyword id="KW-0949">S-adenosyl-L-methionine</keyword>
<keyword id="KW-0808">Transferase</keyword>
<keyword id="KW-0819">tRNA processing</keyword>
<evidence type="ECO:0000255" key="1">
    <source>
        <dbReference type="HAMAP-Rule" id="MF_01864"/>
    </source>
</evidence>
<evidence type="ECO:0000255" key="2">
    <source>
        <dbReference type="PROSITE-ProRule" id="PRU01266"/>
    </source>
</evidence>
<comment type="function">
    <text evidence="1">Catalyzes the methylthiolation of N6-(dimethylallyl)adenosine (i(6)A), leading to the formation of 2-methylthio-N6-(dimethylallyl)adenosine (ms(2)i(6)A) at position 37 in tRNAs that read codons beginning with uridine.</text>
</comment>
<comment type="catalytic activity">
    <reaction evidence="1">
        <text>N(6)-dimethylallyladenosine(37) in tRNA + (sulfur carrier)-SH + AH2 + 2 S-adenosyl-L-methionine = 2-methylsulfanyl-N(6)-dimethylallyladenosine(37) in tRNA + (sulfur carrier)-H + 5'-deoxyadenosine + L-methionine + A + S-adenosyl-L-homocysteine + 2 H(+)</text>
        <dbReference type="Rhea" id="RHEA:37067"/>
        <dbReference type="Rhea" id="RHEA-COMP:10375"/>
        <dbReference type="Rhea" id="RHEA-COMP:10376"/>
        <dbReference type="Rhea" id="RHEA-COMP:14737"/>
        <dbReference type="Rhea" id="RHEA-COMP:14739"/>
        <dbReference type="ChEBI" id="CHEBI:13193"/>
        <dbReference type="ChEBI" id="CHEBI:15378"/>
        <dbReference type="ChEBI" id="CHEBI:17319"/>
        <dbReference type="ChEBI" id="CHEBI:17499"/>
        <dbReference type="ChEBI" id="CHEBI:29917"/>
        <dbReference type="ChEBI" id="CHEBI:57844"/>
        <dbReference type="ChEBI" id="CHEBI:57856"/>
        <dbReference type="ChEBI" id="CHEBI:59789"/>
        <dbReference type="ChEBI" id="CHEBI:64428"/>
        <dbReference type="ChEBI" id="CHEBI:74415"/>
        <dbReference type="ChEBI" id="CHEBI:74417"/>
        <dbReference type="EC" id="2.8.4.3"/>
    </reaction>
</comment>
<comment type="cofactor">
    <cofactor evidence="1">
        <name>[4Fe-4S] cluster</name>
        <dbReference type="ChEBI" id="CHEBI:49883"/>
    </cofactor>
    <text evidence="1">Binds 2 [4Fe-4S] clusters. One cluster is coordinated with 3 cysteines and an exchangeable S-adenosyl-L-methionine.</text>
</comment>
<comment type="subunit">
    <text evidence="1">Monomer.</text>
</comment>
<comment type="subcellular location">
    <subcellularLocation>
        <location evidence="1">Cytoplasm</location>
    </subcellularLocation>
</comment>
<comment type="similarity">
    <text evidence="1">Belongs to the methylthiotransferase family. MiaB subfamily.</text>
</comment>
<organism>
    <name type="scientific">Prochlorococcus marinus (strain NATL1A)</name>
    <dbReference type="NCBI Taxonomy" id="167555"/>
    <lineage>
        <taxon>Bacteria</taxon>
        <taxon>Bacillati</taxon>
        <taxon>Cyanobacteriota</taxon>
        <taxon>Cyanophyceae</taxon>
        <taxon>Synechococcales</taxon>
        <taxon>Prochlorococcaceae</taxon>
        <taxon>Prochlorococcus</taxon>
    </lineage>
</organism>
<sequence>MTTVQLQKTNQPPVKAPRGSYWITTFGCQMNKADSERMSGILEYMGYYPAEEELKADLVLYNTCTIRDSAEQKVYSYLGRQAIRKRSLPNLKIVVAGCLAQQEGESLLRRVPEIDLLMGPQHCNRLESLLNQVDSGQQVLATEEQFILEDITTPRRDSSFCGWVNIIYGCNERCTYCVVPSVRGKEQSRTPEAIKSEVEDLAKSGYKEITLLGQNIDAYGRDFQSQNKEASAQITLSYLLKYIHDIEGIERIRFATSHPRYFTKELIDTCSELPKVCEHFHIPFQSGSNKILKNMGRGYTIESYKNIINYIKSKIPKAAISGDAIVAFPGESETDYEQTLSLIDEIKFDHVNTAAYSPRPNTPAATWPRQLNEDIKVKRLREINSLVENIAKERNQRYKNTSQEILIENINPKDSFQLMGRTRTNRLTFFPRSLENGVENKLGELIKVKITDVRPFSLTAKLL</sequence>
<gene>
    <name evidence="1" type="primary">miaB</name>
    <name type="ordered locus">NATL1_17251</name>
</gene>
<reference key="1">
    <citation type="journal article" date="2007" name="PLoS Genet.">
        <title>Patterns and implications of gene gain and loss in the evolution of Prochlorococcus.</title>
        <authorList>
            <person name="Kettler G.C."/>
            <person name="Martiny A.C."/>
            <person name="Huang K."/>
            <person name="Zucker J."/>
            <person name="Coleman M.L."/>
            <person name="Rodrigue S."/>
            <person name="Chen F."/>
            <person name="Lapidus A."/>
            <person name="Ferriera S."/>
            <person name="Johnson J."/>
            <person name="Steglich C."/>
            <person name="Church G.M."/>
            <person name="Richardson P."/>
            <person name="Chisholm S.W."/>
        </authorList>
    </citation>
    <scope>NUCLEOTIDE SEQUENCE [LARGE SCALE GENOMIC DNA]</scope>
    <source>
        <strain>NATL1A</strain>
    </source>
</reference>